<organism>
    <name type="scientific">Dechloromonas aromatica (strain RCB)</name>
    <dbReference type="NCBI Taxonomy" id="159087"/>
    <lineage>
        <taxon>Bacteria</taxon>
        <taxon>Pseudomonadati</taxon>
        <taxon>Pseudomonadota</taxon>
        <taxon>Betaproteobacteria</taxon>
        <taxon>Rhodocyclales</taxon>
        <taxon>Azonexaceae</taxon>
        <taxon>Dechloromonas</taxon>
    </lineage>
</organism>
<protein>
    <recommendedName>
        <fullName evidence="1">Iron-sulfur cluster assembly protein CyaY</fullName>
    </recommendedName>
</protein>
<sequence>MDDSEFNALAEQALARIDAALEACDADLDFELAPGGVLEIEFADRSKIIVNRHSIAKEIWVAARAGGFHFRWDGASWRDTRDNAELMEKLSTLASQQAGEAIVLR</sequence>
<dbReference type="EMBL" id="CP000089">
    <property type="protein sequence ID" value="AAZ44967.1"/>
    <property type="molecule type" value="Genomic_DNA"/>
</dbReference>
<dbReference type="SMR" id="Q47JL4"/>
<dbReference type="STRING" id="159087.Daro_0208"/>
<dbReference type="KEGG" id="dar:Daro_0208"/>
<dbReference type="eggNOG" id="COG1965">
    <property type="taxonomic scope" value="Bacteria"/>
</dbReference>
<dbReference type="HOGENOM" id="CLU_080880_3_0_4"/>
<dbReference type="OrthoDB" id="285675at2"/>
<dbReference type="GO" id="GO:0005737">
    <property type="term" value="C:cytoplasm"/>
    <property type="evidence" value="ECO:0007669"/>
    <property type="project" value="UniProtKB-ARBA"/>
</dbReference>
<dbReference type="GO" id="GO:0008199">
    <property type="term" value="F:ferric iron binding"/>
    <property type="evidence" value="ECO:0007669"/>
    <property type="project" value="InterPro"/>
</dbReference>
<dbReference type="GO" id="GO:0016226">
    <property type="term" value="P:iron-sulfur cluster assembly"/>
    <property type="evidence" value="ECO:0007669"/>
    <property type="project" value="UniProtKB-UniRule"/>
</dbReference>
<dbReference type="Gene3D" id="3.30.920.10">
    <property type="entry name" value="Frataxin/CyaY"/>
    <property type="match status" value="1"/>
</dbReference>
<dbReference type="HAMAP" id="MF_00142">
    <property type="entry name" value="CyaY"/>
    <property type="match status" value="1"/>
</dbReference>
<dbReference type="InterPro" id="IPR047584">
    <property type="entry name" value="CyaY"/>
</dbReference>
<dbReference type="InterPro" id="IPR002908">
    <property type="entry name" value="Frataxin/CyaY"/>
</dbReference>
<dbReference type="InterPro" id="IPR036524">
    <property type="entry name" value="Frataxin/CyaY_sf"/>
</dbReference>
<dbReference type="NCBIfam" id="TIGR03421">
    <property type="entry name" value="FeS_CyaY"/>
    <property type="match status" value="1"/>
</dbReference>
<dbReference type="PANTHER" id="PTHR16821">
    <property type="entry name" value="FRATAXIN"/>
    <property type="match status" value="1"/>
</dbReference>
<dbReference type="PANTHER" id="PTHR16821:SF2">
    <property type="entry name" value="FRATAXIN, MITOCHONDRIAL"/>
    <property type="match status" value="1"/>
</dbReference>
<dbReference type="Pfam" id="PF01491">
    <property type="entry name" value="Frataxin_Cyay"/>
    <property type="match status" value="1"/>
</dbReference>
<dbReference type="SMART" id="SM01219">
    <property type="entry name" value="Frataxin_Cyay"/>
    <property type="match status" value="1"/>
</dbReference>
<dbReference type="SUPFAM" id="SSF55387">
    <property type="entry name" value="Frataxin/Nqo15-like"/>
    <property type="match status" value="1"/>
</dbReference>
<dbReference type="PROSITE" id="PS50810">
    <property type="entry name" value="FRATAXIN_2"/>
    <property type="match status" value="1"/>
</dbReference>
<reference key="1">
    <citation type="journal article" date="2009" name="BMC Genomics">
        <title>Metabolic analysis of the soil microbe Dechloromonas aromatica str. RCB: indications of a surprisingly complex life-style and cryptic anaerobic pathways for aromatic degradation.</title>
        <authorList>
            <person name="Salinero K.K."/>
            <person name="Keller K."/>
            <person name="Feil W.S."/>
            <person name="Feil H."/>
            <person name="Trong S."/>
            <person name="Di Bartolo G."/>
            <person name="Lapidus A."/>
        </authorList>
    </citation>
    <scope>NUCLEOTIDE SEQUENCE [LARGE SCALE GENOMIC DNA]</scope>
    <source>
        <strain>RCB</strain>
    </source>
</reference>
<proteinExistence type="inferred from homology"/>
<feature type="chain" id="PRO_1000076541" description="Iron-sulfur cluster assembly protein CyaY">
    <location>
        <begin position="1"/>
        <end position="105"/>
    </location>
</feature>
<keyword id="KW-0408">Iron</keyword>
<keyword id="KW-0479">Metal-binding</keyword>
<comment type="function">
    <text evidence="1">Involved in iron-sulfur (Fe-S) cluster assembly. May act as a regulator of Fe-S biogenesis.</text>
</comment>
<comment type="similarity">
    <text evidence="1">Belongs to the frataxin family.</text>
</comment>
<evidence type="ECO:0000255" key="1">
    <source>
        <dbReference type="HAMAP-Rule" id="MF_00142"/>
    </source>
</evidence>
<accession>Q47JL4</accession>
<gene>
    <name evidence="1" type="primary">cyaY</name>
    <name type="ordered locus">Daro_0208</name>
</gene>
<name>CYAY_DECAR</name>